<reference key="1">
    <citation type="journal article" date="2004" name="PLoS Biol.">
        <title>Phylogenomics of the reproductive parasite Wolbachia pipientis wMel: a streamlined genome overrun by mobile genetic elements.</title>
        <authorList>
            <person name="Wu M."/>
            <person name="Sun L.V."/>
            <person name="Vamathevan J.J."/>
            <person name="Riegler M."/>
            <person name="DeBoy R.T."/>
            <person name="Brownlie J.C."/>
            <person name="McGraw E.A."/>
            <person name="Martin W."/>
            <person name="Esser C."/>
            <person name="Ahmadinejad N."/>
            <person name="Wiegand C."/>
            <person name="Madupu R."/>
            <person name="Beanan M.J."/>
            <person name="Brinkac L.M."/>
            <person name="Daugherty S.C."/>
            <person name="Durkin A.S."/>
            <person name="Kolonay J.F."/>
            <person name="Nelson W.C."/>
            <person name="Mohamoud Y."/>
            <person name="Lee P."/>
            <person name="Berry K.J."/>
            <person name="Young M.B."/>
            <person name="Utterback T.R."/>
            <person name="Weidman J.F."/>
            <person name="Nierman W.C."/>
            <person name="Paulsen I.T."/>
            <person name="Nelson K.E."/>
            <person name="Tettelin H."/>
            <person name="O'Neill S.L."/>
            <person name="Eisen J.A."/>
        </authorList>
    </citation>
    <scope>NUCLEOTIDE SEQUENCE [LARGE SCALE GENOMIC DNA]</scope>
</reference>
<proteinExistence type="inferred from homology"/>
<keyword id="KW-0131">Cell cycle</keyword>
<keyword id="KW-0132">Cell division</keyword>
<keyword id="KW-0574">Periplasm</keyword>
<keyword id="KW-0732">Signal</keyword>
<name>TOLB_WOLPM</name>
<dbReference type="EMBL" id="AE017196">
    <property type="protein sequence ID" value="AAS13804.1"/>
    <property type="molecule type" value="Genomic_DNA"/>
</dbReference>
<dbReference type="RefSeq" id="WP_010962324.1">
    <property type="nucleotide sequence ID" value="NZ_OX384529.1"/>
</dbReference>
<dbReference type="SMR" id="Q73IV6"/>
<dbReference type="EnsemblBacteria" id="AAS13804">
    <property type="protein sequence ID" value="AAS13804"/>
    <property type="gene ID" value="WD_0038"/>
</dbReference>
<dbReference type="KEGG" id="wol:WD_0038"/>
<dbReference type="eggNOG" id="COG0823">
    <property type="taxonomic scope" value="Bacteria"/>
</dbReference>
<dbReference type="Proteomes" id="UP000008215">
    <property type="component" value="Chromosome"/>
</dbReference>
<dbReference type="GO" id="GO:0042597">
    <property type="term" value="C:periplasmic space"/>
    <property type="evidence" value="ECO:0007669"/>
    <property type="project" value="UniProtKB-SubCell"/>
</dbReference>
<dbReference type="GO" id="GO:0051301">
    <property type="term" value="P:cell division"/>
    <property type="evidence" value="ECO:0007669"/>
    <property type="project" value="UniProtKB-UniRule"/>
</dbReference>
<dbReference type="GO" id="GO:0017038">
    <property type="term" value="P:protein import"/>
    <property type="evidence" value="ECO:0007669"/>
    <property type="project" value="InterPro"/>
</dbReference>
<dbReference type="Gene3D" id="2.120.10.30">
    <property type="entry name" value="TolB, C-terminal domain"/>
    <property type="match status" value="1"/>
</dbReference>
<dbReference type="Gene3D" id="3.40.50.10070">
    <property type="entry name" value="TolB, N-terminal domain"/>
    <property type="match status" value="1"/>
</dbReference>
<dbReference type="HAMAP" id="MF_00671">
    <property type="entry name" value="TolB"/>
    <property type="match status" value="1"/>
</dbReference>
<dbReference type="InterPro" id="IPR011042">
    <property type="entry name" value="6-blade_b-propeller_TolB-like"/>
</dbReference>
<dbReference type="InterPro" id="IPR011659">
    <property type="entry name" value="PD40"/>
</dbReference>
<dbReference type="InterPro" id="IPR014167">
    <property type="entry name" value="Tol-Pal_TolB"/>
</dbReference>
<dbReference type="InterPro" id="IPR007195">
    <property type="entry name" value="TolB_N"/>
</dbReference>
<dbReference type="PANTHER" id="PTHR36842:SF1">
    <property type="entry name" value="PROTEIN TOLB"/>
    <property type="match status" value="1"/>
</dbReference>
<dbReference type="PANTHER" id="PTHR36842">
    <property type="entry name" value="PROTEIN TOLB HOMOLOG"/>
    <property type="match status" value="1"/>
</dbReference>
<dbReference type="Pfam" id="PF07676">
    <property type="entry name" value="PD40"/>
    <property type="match status" value="5"/>
</dbReference>
<dbReference type="Pfam" id="PF04052">
    <property type="entry name" value="TolB_N"/>
    <property type="match status" value="1"/>
</dbReference>
<dbReference type="SUPFAM" id="SSF52964">
    <property type="entry name" value="TolB, N-terminal domain"/>
    <property type="match status" value="1"/>
</dbReference>
<dbReference type="SUPFAM" id="SSF69304">
    <property type="entry name" value="Tricorn protease N-terminal domain"/>
    <property type="match status" value="1"/>
</dbReference>
<sequence>MKLFVHLVLFISLFIPYFTKAALYVDIKKSSVGNIGLVVSKCTCKTALESELSENIAKVIGTNLSNCGLFNVKRSAEAESKSWKSDTVVTVSLSEISGSALELSFRLFDAFTKRELLTQSVVFPAKDWRKIGHLVSDVIHDRLIGEKGHFNTKITYIAEEKDSNYKSVRKIAVMNQDGSNIKYLTNGDRFVSTPRFSPNGKGIVYISYANGKSYIILKNLKDNTESIISAFEGVVSAPRFSPDGKSLLISHSLGGETNILSLDLSSKRTKKITKGSAISTSPSFSPDQKYMAFSSDISGSQQLYVIDFTNKSKKPKRISFGSGRYATPVWSPKGDLIAFTKIQSGKFYIGVMKPDGKEERLLSEGHKIESPAWLPNGREIIFTRTESPSNSKLYLVDLVKKNQKMVSTPTNASLPDWSYF</sequence>
<accession>Q73IV6</accession>
<feature type="signal peptide" evidence="1">
    <location>
        <begin position="1"/>
        <end position="21"/>
    </location>
</feature>
<feature type="chain" id="PRO_0000034695" description="Tol-Pal system protein TolB" evidence="1">
    <location>
        <begin position="22"/>
        <end position="420"/>
    </location>
</feature>
<protein>
    <recommendedName>
        <fullName evidence="1">Tol-Pal system protein TolB</fullName>
    </recommendedName>
</protein>
<organism>
    <name type="scientific">Wolbachia pipientis wMel</name>
    <dbReference type="NCBI Taxonomy" id="163164"/>
    <lineage>
        <taxon>Bacteria</taxon>
        <taxon>Pseudomonadati</taxon>
        <taxon>Pseudomonadota</taxon>
        <taxon>Alphaproteobacteria</taxon>
        <taxon>Rickettsiales</taxon>
        <taxon>Anaplasmataceae</taxon>
        <taxon>Wolbachieae</taxon>
        <taxon>Wolbachia</taxon>
    </lineage>
</organism>
<comment type="function">
    <text evidence="1">Part of the Tol-Pal system, which plays a role in outer membrane invagination during cell division and is important for maintaining outer membrane integrity.</text>
</comment>
<comment type="subunit">
    <text evidence="1">The Tol-Pal system is composed of five core proteins: the inner membrane proteins TolA, TolQ and TolR, the periplasmic protein TolB and the outer membrane protein Pal. They form a network linking the inner and outer membranes and the peptidoglycan layer.</text>
</comment>
<comment type="subcellular location">
    <subcellularLocation>
        <location evidence="1">Periplasm</location>
    </subcellularLocation>
</comment>
<comment type="similarity">
    <text evidence="1">Belongs to the TolB family.</text>
</comment>
<gene>
    <name evidence="1" type="primary">tolB</name>
    <name type="ordered locus">WD_0038</name>
</gene>
<evidence type="ECO:0000255" key="1">
    <source>
        <dbReference type="HAMAP-Rule" id="MF_00671"/>
    </source>
</evidence>